<accession>Q96WT9</accession>
<proteinExistence type="inferred from homology"/>
<name>LEU3_MAUEX</name>
<organism>
    <name type="scientific">Maudiozyma exigua</name>
    <name type="common">Yeast</name>
    <name type="synonym">Kazachstania exigua</name>
    <dbReference type="NCBI Taxonomy" id="34358"/>
    <lineage>
        <taxon>Eukaryota</taxon>
        <taxon>Fungi</taxon>
        <taxon>Dikarya</taxon>
        <taxon>Ascomycota</taxon>
        <taxon>Saccharomycotina</taxon>
        <taxon>Saccharomycetes</taxon>
        <taxon>Saccharomycetales</taxon>
        <taxon>Saccharomycetaceae</taxon>
        <taxon>Maudiozyma</taxon>
    </lineage>
</organism>
<keyword id="KW-0028">Amino-acid biosynthesis</keyword>
<keyword id="KW-0100">Branched-chain amino acid biosynthesis</keyword>
<keyword id="KW-0963">Cytoplasm</keyword>
<keyword id="KW-0432">Leucine biosynthesis</keyword>
<keyword id="KW-0460">Magnesium</keyword>
<keyword id="KW-0464">Manganese</keyword>
<keyword id="KW-0479">Metal-binding</keyword>
<keyword id="KW-0520">NAD</keyword>
<keyword id="KW-0560">Oxidoreductase</keyword>
<reference key="1">
    <citation type="journal article" date="1999" name="J. Biosci. Bioeng.">
        <title>DNA sequence of the beta-isopropylmalate dehydrogenase gene and phylogenetic analysis of the yeast Saccharomyces exiguus Yp74L-3.</title>
        <authorList>
            <person name="Hisatomi T."/>
            <person name="Horio K."/>
            <person name="Mimoto T."/>
            <person name="Tsuboi M."/>
        </authorList>
    </citation>
    <scope>NUCLEOTIDE SEQUENCE [GENOMIC DNA]</scope>
    <source>
        <strain>Yp74L-3</strain>
    </source>
</reference>
<gene>
    <name type="primary">LEU2</name>
</gene>
<dbReference type="EC" id="1.1.1.85"/>
<dbReference type="EMBL" id="AB006676">
    <property type="protein sequence ID" value="BAB63465.1"/>
    <property type="molecule type" value="Genomic_DNA"/>
</dbReference>
<dbReference type="SMR" id="Q96WT9"/>
<dbReference type="UniPathway" id="UPA00048">
    <property type="reaction ID" value="UER00072"/>
</dbReference>
<dbReference type="GO" id="GO:0005829">
    <property type="term" value="C:cytosol"/>
    <property type="evidence" value="ECO:0007669"/>
    <property type="project" value="TreeGrafter"/>
</dbReference>
<dbReference type="GO" id="GO:0003862">
    <property type="term" value="F:3-isopropylmalate dehydrogenase activity"/>
    <property type="evidence" value="ECO:0007669"/>
    <property type="project" value="UniProtKB-EC"/>
</dbReference>
<dbReference type="GO" id="GO:0000287">
    <property type="term" value="F:magnesium ion binding"/>
    <property type="evidence" value="ECO:0007669"/>
    <property type="project" value="InterPro"/>
</dbReference>
<dbReference type="GO" id="GO:0051287">
    <property type="term" value="F:NAD binding"/>
    <property type="evidence" value="ECO:0007669"/>
    <property type="project" value="InterPro"/>
</dbReference>
<dbReference type="GO" id="GO:0009098">
    <property type="term" value="P:L-leucine biosynthetic process"/>
    <property type="evidence" value="ECO:0007669"/>
    <property type="project" value="UniProtKB-UniPathway"/>
</dbReference>
<dbReference type="FunFam" id="3.40.718.10:FF:000006">
    <property type="entry name" value="3-isopropylmalate dehydrogenase"/>
    <property type="match status" value="1"/>
</dbReference>
<dbReference type="Gene3D" id="3.40.718.10">
    <property type="entry name" value="Isopropylmalate Dehydrogenase"/>
    <property type="match status" value="1"/>
</dbReference>
<dbReference type="InterPro" id="IPR019818">
    <property type="entry name" value="IsoCit/isopropylmalate_DH_CS"/>
</dbReference>
<dbReference type="InterPro" id="IPR024084">
    <property type="entry name" value="IsoPropMal-DH-like_dom"/>
</dbReference>
<dbReference type="InterPro" id="IPR004429">
    <property type="entry name" value="Isopropylmalate_DH"/>
</dbReference>
<dbReference type="NCBIfam" id="TIGR00169">
    <property type="entry name" value="leuB"/>
    <property type="match status" value="1"/>
</dbReference>
<dbReference type="PANTHER" id="PTHR42979">
    <property type="entry name" value="3-ISOPROPYLMALATE DEHYDROGENASE"/>
    <property type="match status" value="1"/>
</dbReference>
<dbReference type="PANTHER" id="PTHR42979:SF1">
    <property type="entry name" value="3-ISOPROPYLMALATE DEHYDROGENASE"/>
    <property type="match status" value="1"/>
</dbReference>
<dbReference type="Pfam" id="PF00180">
    <property type="entry name" value="Iso_dh"/>
    <property type="match status" value="1"/>
</dbReference>
<dbReference type="SMART" id="SM01329">
    <property type="entry name" value="Iso_dh"/>
    <property type="match status" value="1"/>
</dbReference>
<dbReference type="SUPFAM" id="SSF53659">
    <property type="entry name" value="Isocitrate/Isopropylmalate dehydrogenase-like"/>
    <property type="match status" value="1"/>
</dbReference>
<dbReference type="PROSITE" id="PS00470">
    <property type="entry name" value="IDH_IMDH"/>
    <property type="match status" value="1"/>
</dbReference>
<comment type="function">
    <text evidence="1">Catalyzes the oxidation of 3-carboxy-2-hydroxy-4-methylpentanoate (3-isopropylmalate) to 3-carboxy-4-methyl-2-oxopentanoate. The product decarboxylates to 4-methyl-2 oxopentanoate (By similarity).</text>
</comment>
<comment type="catalytic activity">
    <reaction>
        <text>(2R,3S)-3-isopropylmalate + NAD(+) = 4-methyl-2-oxopentanoate + CO2 + NADH</text>
        <dbReference type="Rhea" id="RHEA:32271"/>
        <dbReference type="ChEBI" id="CHEBI:16526"/>
        <dbReference type="ChEBI" id="CHEBI:17865"/>
        <dbReference type="ChEBI" id="CHEBI:35121"/>
        <dbReference type="ChEBI" id="CHEBI:57540"/>
        <dbReference type="ChEBI" id="CHEBI:57945"/>
        <dbReference type="EC" id="1.1.1.85"/>
    </reaction>
</comment>
<comment type="cofactor">
    <cofactor evidence="1">
        <name>Mg(2+)</name>
        <dbReference type="ChEBI" id="CHEBI:18420"/>
    </cofactor>
    <cofactor evidence="1">
        <name>Mn(2+)</name>
        <dbReference type="ChEBI" id="CHEBI:29035"/>
    </cofactor>
    <text evidence="1">Binds 1 Mg(2+) or Mn(2+) ion per subunit.</text>
</comment>
<comment type="pathway">
    <text>Amino-acid biosynthesis; L-leucine biosynthesis; L-leucine from 3-methyl-2-oxobutanoate: step 3/4.</text>
</comment>
<comment type="subunit">
    <text evidence="1">Homodimer.</text>
</comment>
<comment type="subcellular location">
    <subcellularLocation>
        <location evidence="1">Cytoplasm</location>
    </subcellularLocation>
</comment>
<comment type="similarity">
    <text evidence="2">Belongs to the isocitrate and isopropylmalate dehydrogenases family.</text>
</comment>
<sequence>MAQTTKHIVVLPGDHVGQEITEEAIKVLNAISSVRPNVNFDFQHHLIGGAAIDATGVPLPDEALEASKKADAVLLGAVGGPKWGTGSVRPEQGLLKIRKELQLYANLRPCNFASDSLLDLSPLKPEIVKGTDICIVRELVGGIYFGERKEDEGDGVAWDSEKYSVSEVQRITRMAGFLALQHNPPLPVWSLDKANVLASSRLWRKTVEETIKNEFPTLTVQHQLIDSAAMILVKNPTHLNGVVIANNMFGDIISDEASVIPGSLGLLPSASLASLPDTNTAFGLYEPCHGSAPDLPKGKVNPVATILSVAMMLKLSLNMTEEGIAVEKAVKQVLDSGVRTADLRGSNSTSEVGDAIAKAVKEILA</sequence>
<evidence type="ECO:0000250" key="1"/>
<evidence type="ECO:0000305" key="2"/>
<feature type="chain" id="PRO_0000083622" description="3-isopropylmalate dehydrogenase">
    <location>
        <begin position="1"/>
        <end position="365"/>
    </location>
</feature>
<feature type="binding site" evidence="1">
    <location>
        <begin position="80"/>
        <end position="91"/>
    </location>
    <ligand>
        <name>NAD(+)</name>
        <dbReference type="ChEBI" id="CHEBI:57540"/>
    </ligand>
</feature>
<feature type="binding site" evidence="1">
    <location>
        <position position="98"/>
    </location>
    <ligand>
        <name>substrate</name>
    </ligand>
</feature>
<feature type="binding site" evidence="1">
    <location>
        <position position="108"/>
    </location>
    <ligand>
        <name>substrate</name>
    </ligand>
</feature>
<feature type="binding site" evidence="1">
    <location>
        <position position="137"/>
    </location>
    <ligand>
        <name>substrate</name>
    </ligand>
</feature>
<feature type="binding site" evidence="1">
    <location>
        <position position="226"/>
    </location>
    <ligand>
        <name>Mg(2+)</name>
        <dbReference type="ChEBI" id="CHEBI:18420"/>
    </ligand>
</feature>
<feature type="binding site" evidence="1">
    <location>
        <position position="226"/>
    </location>
    <ligand>
        <name>substrate</name>
    </ligand>
</feature>
<feature type="binding site" evidence="1">
    <location>
        <position position="251"/>
    </location>
    <ligand>
        <name>Mg(2+)</name>
        <dbReference type="ChEBI" id="CHEBI:18420"/>
    </ligand>
</feature>
<feature type="binding site" evidence="1">
    <location>
        <position position="255"/>
    </location>
    <ligand>
        <name>Mg(2+)</name>
        <dbReference type="ChEBI" id="CHEBI:18420"/>
    </ligand>
</feature>
<feature type="binding site" evidence="1">
    <location>
        <begin position="290"/>
        <end position="301"/>
    </location>
    <ligand>
        <name>NAD(+)</name>
        <dbReference type="ChEBI" id="CHEBI:57540"/>
    </ligand>
</feature>
<feature type="site" description="Important for catalysis" evidence="1">
    <location>
        <position position="144"/>
    </location>
</feature>
<feature type="site" description="Important for catalysis" evidence="1">
    <location>
        <position position="193"/>
    </location>
</feature>
<protein>
    <recommendedName>
        <fullName>3-isopropylmalate dehydrogenase</fullName>
        <shortName>3-IPM-DH</shortName>
        <shortName>IMDH</shortName>
        <ecNumber>1.1.1.85</ecNumber>
    </recommendedName>
    <alternativeName>
        <fullName>Beta-IPM dehydrogenase</fullName>
    </alternativeName>
</protein>